<evidence type="ECO:0000255" key="1">
    <source>
        <dbReference type="HAMAP-Rule" id="MF_00251"/>
    </source>
</evidence>
<evidence type="ECO:0000305" key="2"/>
<feature type="chain" id="PRO_0000344634" description="Large ribosomal subunit protein bL36A">
    <location>
        <begin position="1"/>
        <end position="37"/>
    </location>
</feature>
<organism>
    <name type="scientific">Actinobacillus pleuropneumoniae serotype 3 (strain JL03)</name>
    <dbReference type="NCBI Taxonomy" id="434271"/>
    <lineage>
        <taxon>Bacteria</taxon>
        <taxon>Pseudomonadati</taxon>
        <taxon>Pseudomonadota</taxon>
        <taxon>Gammaproteobacteria</taxon>
        <taxon>Pasteurellales</taxon>
        <taxon>Pasteurellaceae</taxon>
        <taxon>Actinobacillus</taxon>
    </lineage>
</organism>
<proteinExistence type="inferred from homology"/>
<comment type="similarity">
    <text evidence="1">Belongs to the bacterial ribosomal protein bL36 family.</text>
</comment>
<keyword id="KW-0687">Ribonucleoprotein</keyword>
<keyword id="KW-0689">Ribosomal protein</keyword>
<accession>B0BSV2</accession>
<reference key="1">
    <citation type="journal article" date="2008" name="PLoS ONE">
        <title>Genome biology of Actinobacillus pleuropneumoniae JL03, an isolate of serotype 3 prevalent in China.</title>
        <authorList>
            <person name="Xu Z."/>
            <person name="Zhou Y."/>
            <person name="Li L."/>
            <person name="Zhou R."/>
            <person name="Xiao S."/>
            <person name="Wan Y."/>
            <person name="Zhang S."/>
            <person name="Wang K."/>
            <person name="Li W."/>
            <person name="Li L."/>
            <person name="Jin H."/>
            <person name="Kang M."/>
            <person name="Dalai B."/>
            <person name="Li T."/>
            <person name="Liu L."/>
            <person name="Cheng Y."/>
            <person name="Zhang L."/>
            <person name="Xu T."/>
            <person name="Zheng H."/>
            <person name="Pu S."/>
            <person name="Wang B."/>
            <person name="Gu W."/>
            <person name="Zhang X.L."/>
            <person name="Zhu G.-F."/>
            <person name="Wang S."/>
            <person name="Zhao G.-P."/>
            <person name="Chen H."/>
        </authorList>
    </citation>
    <scope>NUCLEOTIDE SEQUENCE [LARGE SCALE GENOMIC DNA]</scope>
    <source>
        <strain>JL03</strain>
    </source>
</reference>
<name>RL361_ACTPJ</name>
<protein>
    <recommendedName>
        <fullName evidence="1">Large ribosomal subunit protein bL36A</fullName>
    </recommendedName>
    <alternativeName>
        <fullName evidence="2">50S ribosomal protein L36 1</fullName>
    </alternativeName>
</protein>
<gene>
    <name evidence="1" type="primary">rpmJ1</name>
    <name type="ordered locus">APJL_1816</name>
</gene>
<dbReference type="EMBL" id="CP000687">
    <property type="protein sequence ID" value="ABY70366.1"/>
    <property type="molecule type" value="Genomic_DNA"/>
</dbReference>
<dbReference type="SMR" id="B0BSV2"/>
<dbReference type="KEGG" id="apj:APJL_1816"/>
<dbReference type="HOGENOM" id="CLU_135723_6_2_6"/>
<dbReference type="Proteomes" id="UP000008547">
    <property type="component" value="Chromosome"/>
</dbReference>
<dbReference type="GO" id="GO:0005737">
    <property type="term" value="C:cytoplasm"/>
    <property type="evidence" value="ECO:0007669"/>
    <property type="project" value="UniProtKB-ARBA"/>
</dbReference>
<dbReference type="GO" id="GO:1990904">
    <property type="term" value="C:ribonucleoprotein complex"/>
    <property type="evidence" value="ECO:0007669"/>
    <property type="project" value="UniProtKB-KW"/>
</dbReference>
<dbReference type="GO" id="GO:0005840">
    <property type="term" value="C:ribosome"/>
    <property type="evidence" value="ECO:0007669"/>
    <property type="project" value="UniProtKB-KW"/>
</dbReference>
<dbReference type="GO" id="GO:0003735">
    <property type="term" value="F:structural constituent of ribosome"/>
    <property type="evidence" value="ECO:0007669"/>
    <property type="project" value="InterPro"/>
</dbReference>
<dbReference type="GO" id="GO:0006412">
    <property type="term" value="P:translation"/>
    <property type="evidence" value="ECO:0007669"/>
    <property type="project" value="UniProtKB-UniRule"/>
</dbReference>
<dbReference type="HAMAP" id="MF_00251">
    <property type="entry name" value="Ribosomal_bL36"/>
    <property type="match status" value="1"/>
</dbReference>
<dbReference type="InterPro" id="IPR000473">
    <property type="entry name" value="Ribosomal_bL36"/>
</dbReference>
<dbReference type="InterPro" id="IPR035977">
    <property type="entry name" value="Ribosomal_bL36_sp"/>
</dbReference>
<dbReference type="NCBIfam" id="TIGR01022">
    <property type="entry name" value="rpmJ_bact"/>
    <property type="match status" value="1"/>
</dbReference>
<dbReference type="PANTHER" id="PTHR42888">
    <property type="entry name" value="50S RIBOSOMAL PROTEIN L36, CHLOROPLASTIC"/>
    <property type="match status" value="1"/>
</dbReference>
<dbReference type="PANTHER" id="PTHR42888:SF1">
    <property type="entry name" value="LARGE RIBOSOMAL SUBUNIT PROTEIN BL36C"/>
    <property type="match status" value="1"/>
</dbReference>
<dbReference type="Pfam" id="PF00444">
    <property type="entry name" value="Ribosomal_L36"/>
    <property type="match status" value="1"/>
</dbReference>
<dbReference type="SUPFAM" id="SSF57840">
    <property type="entry name" value="Ribosomal protein L36"/>
    <property type="match status" value="1"/>
</dbReference>
<dbReference type="PROSITE" id="PS00828">
    <property type="entry name" value="RIBOSOMAL_L36"/>
    <property type="match status" value="1"/>
</dbReference>
<sequence length="37" mass="4265">MKVRASVKKLCRNCKVVKREGVVRVICSDPKHKQRQG</sequence>